<comment type="function">
    <text evidence="5">Neuronal cell surface protein that may be involved in cell recognition and cell adhesion. May mediate intracellular signaling (By similarity).</text>
</comment>
<comment type="subunit">
    <text evidence="1 3 11 12 14">The laminin G-like domain 2 binds to NXPH1 (By similarity). Specific isoforms bind to alpha-dystroglycan (By similarity). The cytoplasmic C-terminal region binds to CASK (By similarity). Specific isoforms bind neuroligins NLGN1, NLGN2 and NLGN3 (By similarity). Interacts with CLSTN3 (PubMed:24094106, PubMed:24613359, PubMed:32434929).</text>
</comment>
<comment type="interaction">
    <interactant intactId="EBI-7281557">
        <id>Q6P9K9</id>
    </interactant>
    <interactant intactId="EBI-728180">
        <id>O14522</id>
        <label>PTPRT</label>
    </interactant>
    <organismsDiffer>true</organismsDiffer>
    <experiments>2</experiments>
</comment>
<comment type="subcellular location">
    <subcellularLocation>
        <location evidence="5">Presynaptic cell membrane</location>
        <topology evidence="6">Single-pass type I membrane protein</topology>
    </subcellularLocation>
</comment>
<comment type="alternative products">
    <event type="alternative promoter"/>
    <event type="alternative splicing"/>
    <isoform>
        <id>Q6P9K9-1</id>
        <name>1a</name>
        <sequence type="displayed"/>
    </isoform>
    <isoform>
        <id>Q6P9K9-2</id>
        <name>2a</name>
        <sequence type="described" ref="VSP_041710 VSP_041711 VSP_041712"/>
    </isoform>
    <isoform>
        <id>Q8C985-1</id>
        <name>1b</name>
        <sequence type="external"/>
    </isoform>
    <text>A number of isoforms, alpha-type and beta-type are produced by alternative promoter usage. Beta-type isoforms differ from alpha-type isoforms in their N-terminus.</text>
</comment>
<comment type="tissue specificity">
    <text evidence="10">Brain and arteries (at protein level).</text>
</comment>
<comment type="PTM">
    <text evidence="13">O-glycosylated; contains heparan sulfate. Heparan sulfate attachment is required for synapse development by mediating interactions with neuroligins.</text>
</comment>
<comment type="miscellaneous">
    <molecule>Isoform 2a</molecule>
    <text evidence="16">Produced by alternative splicing.</text>
</comment>
<comment type="similarity">
    <text evidence="16">Belongs to the neurexin family.</text>
</comment>
<comment type="sequence caution" evidence="16">
    <conflict type="miscellaneous discrepancy">
        <sequence resource="EMBL-CDS" id="AAH60719"/>
    </conflict>
    <text>Contains an insert which is not supported by any other transcript and which does not match with the genome.</text>
</comment>
<feature type="signal peptide" evidence="6">
    <location>
        <begin position="1"/>
        <end position="27"/>
    </location>
</feature>
<feature type="chain" id="PRO_0000412557" description="Neurexin-3">
    <location>
        <begin position="28"/>
        <end position="1571"/>
    </location>
</feature>
<feature type="topological domain" description="Extracellular" evidence="6">
    <location>
        <begin position="28"/>
        <end position="1496"/>
    </location>
</feature>
<feature type="transmembrane region" description="Helical" evidence="6">
    <location>
        <begin position="1497"/>
        <end position="1517"/>
    </location>
</feature>
<feature type="topological domain" description="Cytoplasmic" evidence="6">
    <location>
        <begin position="1518"/>
        <end position="1571"/>
    </location>
</feature>
<feature type="domain" description="Laminin G-like 1" evidence="8">
    <location>
        <begin position="28"/>
        <end position="202"/>
    </location>
</feature>
<feature type="domain" description="EGF-like 1" evidence="7">
    <location>
        <begin position="198"/>
        <end position="235"/>
    </location>
</feature>
<feature type="domain" description="Laminin G-like 2" evidence="8">
    <location>
        <begin position="258"/>
        <end position="440"/>
    </location>
</feature>
<feature type="domain" description="Laminin G-like 3" evidence="8">
    <location>
        <begin position="447"/>
        <end position="639"/>
    </location>
</feature>
<feature type="domain" description="EGF-like 2" evidence="7">
    <location>
        <begin position="643"/>
        <end position="680"/>
    </location>
</feature>
<feature type="domain" description="Laminin G-like 4" evidence="8">
    <location>
        <begin position="685"/>
        <end position="857"/>
    </location>
</feature>
<feature type="domain" description="Laminin G-like 5" evidence="8">
    <location>
        <begin position="871"/>
        <end position="1046"/>
    </location>
</feature>
<feature type="domain" description="EGF-like 3" evidence="7">
    <location>
        <begin position="1049"/>
        <end position="1086"/>
    </location>
</feature>
<feature type="domain" description="Laminin G-like 6" evidence="8">
    <location>
        <begin position="1090"/>
        <end position="1290"/>
    </location>
</feature>
<feature type="region of interest" description="Disordered" evidence="9">
    <location>
        <begin position="1324"/>
        <end position="1348"/>
    </location>
</feature>
<feature type="region of interest" description="Disordered" evidence="9">
    <location>
        <begin position="1539"/>
        <end position="1571"/>
    </location>
</feature>
<feature type="compositionally biased region" description="Polar residues" evidence="9">
    <location>
        <begin position="1333"/>
        <end position="1348"/>
    </location>
</feature>
<feature type="binding site" evidence="2">
    <location>
        <position position="304"/>
    </location>
    <ligand>
        <name>Ca(2+)</name>
        <dbReference type="ChEBI" id="CHEBI:29108"/>
        <label>1</label>
    </ligand>
</feature>
<feature type="binding site" evidence="2">
    <location>
        <position position="321"/>
    </location>
    <ligand>
        <name>Ca(2+)</name>
        <dbReference type="ChEBI" id="CHEBI:29108"/>
        <label>1</label>
    </ligand>
</feature>
<feature type="binding site" evidence="2">
    <location>
        <position position="374"/>
    </location>
    <ligand>
        <name>Ca(2+)</name>
        <dbReference type="ChEBI" id="CHEBI:29108"/>
        <label>1</label>
    </ligand>
</feature>
<feature type="binding site" evidence="2">
    <location>
        <position position="732"/>
    </location>
    <ligand>
        <name>Ca(2+)</name>
        <dbReference type="ChEBI" id="CHEBI:29108"/>
        <label>2</label>
    </ligand>
</feature>
<feature type="binding site" evidence="2">
    <location>
        <position position="749"/>
    </location>
    <ligand>
        <name>Ca(2+)</name>
        <dbReference type="ChEBI" id="CHEBI:29108"/>
        <label>2</label>
    </ligand>
</feature>
<feature type="binding site" evidence="2">
    <location>
        <position position="807"/>
    </location>
    <ligand>
        <name>Ca(2+)</name>
        <dbReference type="ChEBI" id="CHEBI:29108"/>
        <label>2</label>
    </ligand>
</feature>
<feature type="binding site" evidence="5">
    <location>
        <position position="1142"/>
    </location>
    <ligand>
        <name>Ca(2+)</name>
        <dbReference type="ChEBI" id="CHEBI:29108"/>
        <label>3</label>
    </ligand>
</feature>
<feature type="binding site" evidence="5">
    <location>
        <position position="1159"/>
    </location>
    <ligand>
        <name>Ca(2+)</name>
        <dbReference type="ChEBI" id="CHEBI:29108"/>
        <label>3</label>
    </ligand>
</feature>
<feature type="binding site" evidence="5">
    <location>
        <position position="1241"/>
    </location>
    <ligand>
        <name>Ca(2+)</name>
        <dbReference type="ChEBI" id="CHEBI:29108"/>
        <label>3</label>
    </ligand>
</feature>
<feature type="binding site" evidence="5">
    <location>
        <position position="1243"/>
    </location>
    <ligand>
        <name>Ca(2+)</name>
        <dbReference type="ChEBI" id="CHEBI:29108"/>
        <label>3</label>
    </ligand>
</feature>
<feature type="glycosylation site" description="N-linked (GlcNAc...) asparagine" evidence="6">
    <location>
        <position position="58"/>
    </location>
</feature>
<feature type="glycosylation site" description="N-linked (GlcNAc...) asparagine" evidence="6">
    <location>
        <position position="105"/>
    </location>
</feature>
<feature type="glycosylation site" description="N-linked (GlcNAc...) asparagine" evidence="6">
    <location>
        <position position="757"/>
    </location>
</feature>
<feature type="glycosylation site" description="N-linked (GlcNAc...) asparagine" evidence="6">
    <location>
        <position position="1189"/>
    </location>
</feature>
<feature type="glycosylation site" description="N-linked (GlcNAc...) asparagine" evidence="6">
    <location>
        <position position="1287"/>
    </location>
</feature>
<feature type="glycosylation site" description="N-linked (GlcNAc...) asparagine" evidence="6">
    <location>
        <position position="1331"/>
    </location>
</feature>
<feature type="glycosylation site" description="O-linked (Xyl...) (heparan sulfate) serine" evidence="4">
    <location>
        <position position="1347"/>
    </location>
</feature>
<feature type="disulfide bond" evidence="7">
    <location>
        <begin position="202"/>
        <end position="213"/>
    </location>
</feature>
<feature type="disulfide bond" evidence="7">
    <location>
        <begin position="207"/>
        <end position="222"/>
    </location>
</feature>
<feature type="disulfide bond" evidence="7">
    <location>
        <begin position="224"/>
        <end position="234"/>
    </location>
</feature>
<feature type="disulfide bond" evidence="8">
    <location>
        <begin position="404"/>
        <end position="440"/>
    </location>
</feature>
<feature type="disulfide bond" evidence="8">
    <location>
        <begin position="610"/>
        <end position="639"/>
    </location>
</feature>
<feature type="disulfide bond" evidence="7">
    <location>
        <begin position="647"/>
        <end position="658"/>
    </location>
</feature>
<feature type="disulfide bond" evidence="7">
    <location>
        <begin position="652"/>
        <end position="667"/>
    </location>
</feature>
<feature type="disulfide bond" evidence="7">
    <location>
        <begin position="669"/>
        <end position="679"/>
    </location>
</feature>
<feature type="disulfide bond" evidence="8">
    <location>
        <begin position="1018"/>
        <end position="1046"/>
    </location>
</feature>
<feature type="disulfide bond" evidence="7">
    <location>
        <begin position="1053"/>
        <end position="1064"/>
    </location>
</feature>
<feature type="disulfide bond" evidence="7">
    <location>
        <begin position="1058"/>
        <end position="1073"/>
    </location>
</feature>
<feature type="disulfide bond" evidence="7">
    <location>
        <begin position="1075"/>
        <end position="1085"/>
    </location>
</feature>
<feature type="splice variant" id="VSP_041710" description="In isoform 2a." evidence="15">
    <location>
        <begin position="1"/>
        <end position="373"/>
    </location>
</feature>
<feature type="splice variant" id="VSP_041711" description="In isoform 2a." evidence="15">
    <original>E</original>
    <variation>EVALTKADLQ</variation>
    <location>
        <position position="1047"/>
    </location>
</feature>
<feature type="splice variant" id="VSP_041712" description="In isoform 2a." evidence="15">
    <location>
        <begin position="1364"/>
        <end position="1470"/>
    </location>
</feature>
<feature type="sequence conflict" description="In Ref. 1; BAC27716." evidence="16" ref="1">
    <original>A</original>
    <variation>T</variation>
    <location>
        <position position="390"/>
    </location>
</feature>
<feature type="strand" evidence="17">
    <location>
        <begin position="1091"/>
        <end position="1104"/>
    </location>
</feature>
<feature type="helix" evidence="17">
    <location>
        <begin position="1107"/>
        <end position="1109"/>
    </location>
</feature>
<feature type="strand" evidence="17">
    <location>
        <begin position="1113"/>
        <end position="1123"/>
    </location>
</feature>
<feature type="strand" evidence="17">
    <location>
        <begin position="1127"/>
        <end position="1137"/>
    </location>
</feature>
<feature type="strand" evidence="17">
    <location>
        <begin position="1143"/>
        <end position="1149"/>
    </location>
</feature>
<feature type="strand" evidence="17">
    <location>
        <begin position="1152"/>
        <end position="1162"/>
    </location>
</feature>
<feature type="strand" evidence="17">
    <location>
        <begin position="1164"/>
        <end position="1167"/>
    </location>
</feature>
<feature type="strand" evidence="17">
    <location>
        <begin position="1175"/>
        <end position="1177"/>
    </location>
</feature>
<feature type="strand" evidence="17">
    <location>
        <begin position="1179"/>
        <end position="1186"/>
    </location>
</feature>
<feature type="strand" evidence="17">
    <location>
        <begin position="1189"/>
        <end position="1194"/>
    </location>
</feature>
<feature type="strand" evidence="17">
    <location>
        <begin position="1200"/>
        <end position="1202"/>
    </location>
</feature>
<feature type="strand" evidence="17">
    <location>
        <begin position="1245"/>
        <end position="1252"/>
    </location>
</feature>
<feature type="helix" evidence="17">
    <location>
        <begin position="1253"/>
        <end position="1255"/>
    </location>
</feature>
<feature type="strand" evidence="17">
    <location>
        <begin position="1261"/>
        <end position="1268"/>
    </location>
</feature>
<feature type="helix" evidence="17">
    <location>
        <begin position="1273"/>
        <end position="1278"/>
    </location>
</feature>
<feature type="strand" evidence="17">
    <location>
        <begin position="1284"/>
        <end position="1293"/>
    </location>
</feature>
<organism>
    <name type="scientific">Mus musculus</name>
    <name type="common">Mouse</name>
    <dbReference type="NCBI Taxonomy" id="10090"/>
    <lineage>
        <taxon>Eukaryota</taxon>
        <taxon>Metazoa</taxon>
        <taxon>Chordata</taxon>
        <taxon>Craniata</taxon>
        <taxon>Vertebrata</taxon>
        <taxon>Euteleostomi</taxon>
        <taxon>Mammalia</taxon>
        <taxon>Eutheria</taxon>
        <taxon>Euarchontoglires</taxon>
        <taxon>Glires</taxon>
        <taxon>Rodentia</taxon>
        <taxon>Myomorpha</taxon>
        <taxon>Muroidea</taxon>
        <taxon>Muridae</taxon>
        <taxon>Murinae</taxon>
        <taxon>Mus</taxon>
        <taxon>Mus</taxon>
    </lineage>
</organism>
<gene>
    <name type="primary">Nrxn3</name>
</gene>
<protein>
    <recommendedName>
        <fullName>Neurexin-3</fullName>
    </recommendedName>
    <alternativeName>
        <fullName>Neurexin III-alpha</fullName>
    </alternativeName>
    <alternativeName>
        <fullName>Neurexin-3-alpha</fullName>
    </alternativeName>
</protein>
<dbReference type="EMBL" id="AK032126">
    <property type="protein sequence ID" value="BAC27716.1"/>
    <property type="molecule type" value="mRNA"/>
</dbReference>
<dbReference type="EMBL" id="AC115709">
    <property type="status" value="NOT_ANNOTATED_CDS"/>
    <property type="molecule type" value="Genomic_DNA"/>
</dbReference>
<dbReference type="EMBL" id="AC115744">
    <property type="status" value="NOT_ANNOTATED_CDS"/>
    <property type="molecule type" value="Genomic_DNA"/>
</dbReference>
<dbReference type="EMBL" id="AC115910">
    <property type="status" value="NOT_ANNOTATED_CDS"/>
    <property type="molecule type" value="Genomic_DNA"/>
</dbReference>
<dbReference type="EMBL" id="AC120383">
    <property type="status" value="NOT_ANNOTATED_CDS"/>
    <property type="molecule type" value="Genomic_DNA"/>
</dbReference>
<dbReference type="EMBL" id="AC154495">
    <property type="status" value="NOT_ANNOTATED_CDS"/>
    <property type="molecule type" value="Genomic_DNA"/>
</dbReference>
<dbReference type="EMBL" id="AC155231">
    <property type="status" value="NOT_ANNOTATED_CDS"/>
    <property type="molecule type" value="Genomic_DNA"/>
</dbReference>
<dbReference type="EMBL" id="AC155274">
    <property type="status" value="NOT_ANNOTATED_CDS"/>
    <property type="molecule type" value="Genomic_DNA"/>
</dbReference>
<dbReference type="EMBL" id="AC156637">
    <property type="status" value="NOT_ANNOTATED_CDS"/>
    <property type="molecule type" value="Genomic_DNA"/>
</dbReference>
<dbReference type="EMBL" id="AC161049">
    <property type="status" value="NOT_ANNOTATED_CDS"/>
    <property type="molecule type" value="Genomic_DNA"/>
</dbReference>
<dbReference type="EMBL" id="AC171335">
    <property type="status" value="NOT_ANNOTATED_CDS"/>
    <property type="molecule type" value="Genomic_DNA"/>
</dbReference>
<dbReference type="EMBL" id="CAAA01025627">
    <property type="status" value="NOT_ANNOTATED_CDS"/>
    <property type="molecule type" value="Genomic_DNA"/>
</dbReference>
<dbReference type="EMBL" id="CR974428">
    <property type="status" value="NOT_ANNOTATED_CDS"/>
    <property type="molecule type" value="Genomic_DNA"/>
</dbReference>
<dbReference type="EMBL" id="CR974583">
    <property type="status" value="NOT_ANNOTATED_CDS"/>
    <property type="molecule type" value="Genomic_DNA"/>
</dbReference>
<dbReference type="EMBL" id="CT009613">
    <property type="status" value="NOT_ANNOTATED_CDS"/>
    <property type="molecule type" value="Genomic_DNA"/>
</dbReference>
<dbReference type="EMBL" id="CT009725">
    <property type="status" value="NOT_ANNOTATED_CDS"/>
    <property type="molecule type" value="Genomic_DNA"/>
</dbReference>
<dbReference type="EMBL" id="CT010588">
    <property type="status" value="NOT_ANNOTATED_CDS"/>
    <property type="molecule type" value="Genomic_DNA"/>
</dbReference>
<dbReference type="EMBL" id="CU041252">
    <property type="status" value="NOT_ANNOTATED_CDS"/>
    <property type="molecule type" value="Genomic_DNA"/>
</dbReference>
<dbReference type="EMBL" id="BC060719">
    <property type="protein sequence ID" value="AAH60719.1"/>
    <property type="status" value="ALT_SEQ"/>
    <property type="molecule type" value="mRNA"/>
</dbReference>
<dbReference type="CCDS" id="CCDS49134.1">
    <molecule id="Q6P9K9-2"/>
</dbReference>
<dbReference type="CCDS" id="CCDS56856.1">
    <molecule id="Q6P9K9-1"/>
</dbReference>
<dbReference type="RefSeq" id="NP_001185516.2">
    <molecule id="Q6P9K9-1"/>
    <property type="nucleotide sequence ID" value="NM_001198587.4"/>
</dbReference>
<dbReference type="RefSeq" id="NP_766132.2">
    <molecule id="Q6P9K9-2"/>
    <property type="nucleotide sequence ID" value="NM_172544.3"/>
</dbReference>
<dbReference type="RefSeq" id="XP_006515620.1">
    <property type="nucleotide sequence ID" value="XM_006515557.1"/>
</dbReference>
<dbReference type="PDB" id="3MW4">
    <property type="method" value="X-ray"/>
    <property type="resolution" value="2.00 A"/>
    <property type="chains" value="A/B/C=1090-1293"/>
</dbReference>
<dbReference type="PDBsum" id="3MW4"/>
<dbReference type="SMR" id="Q6P9K9"/>
<dbReference type="BioGRID" id="201853">
    <property type="interactions" value="2"/>
</dbReference>
<dbReference type="FunCoup" id="Q6P9K9">
    <property type="interactions" value="725"/>
</dbReference>
<dbReference type="IntAct" id="Q6P9K9">
    <property type="interactions" value="2"/>
</dbReference>
<dbReference type="MINT" id="Q6P9K9"/>
<dbReference type="STRING" id="10090.ENSMUSP00000129678"/>
<dbReference type="GlyConnect" id="2541">
    <property type="glycosylation" value="3 N-Linked glycans (3 sites)"/>
</dbReference>
<dbReference type="GlyCosmos" id="Q6P9K9">
    <property type="glycosylation" value="6 sites, 3 glycans"/>
</dbReference>
<dbReference type="GlyGen" id="Q6P9K9">
    <property type="glycosylation" value="8 sites, 6 N-linked glycans (4 sites), 1 O-linked glycan (1 site)"/>
</dbReference>
<dbReference type="iPTMnet" id="Q6P9K9"/>
<dbReference type="PhosphoSitePlus" id="Q6P9K9"/>
<dbReference type="SwissPalm" id="Q6P9K9"/>
<dbReference type="PaxDb" id="10090-ENSMUSP00000129678"/>
<dbReference type="PeptideAtlas" id="Q6P9K9"/>
<dbReference type="ProteomicsDB" id="293974">
    <molecule id="Q6P9K9-1"/>
</dbReference>
<dbReference type="ProteomicsDB" id="293975">
    <molecule id="Q6P9K9-2"/>
</dbReference>
<dbReference type="Antibodypedia" id="106">
    <property type="antibodies" value="235 antibodies from 31 providers"/>
</dbReference>
<dbReference type="DNASU" id="18191"/>
<dbReference type="Ensembl" id="ENSMUST00000057634.14">
    <molecule id="Q6P9K9-2"/>
    <property type="protein sequence ID" value="ENSMUSP00000050075.8"/>
    <property type="gene ID" value="ENSMUSG00000066392.13"/>
</dbReference>
<dbReference type="Ensembl" id="ENSMUST00000163134.8">
    <molecule id="Q6P9K9-1"/>
    <property type="protein sequence ID" value="ENSMUSP00000129678.2"/>
    <property type="gene ID" value="ENSMUSG00000066392.13"/>
</dbReference>
<dbReference type="Ensembl" id="ENSMUST00000167887.8">
    <molecule id="Q6P9K9-2"/>
    <property type="protein sequence ID" value="ENSMUSP00000127926.2"/>
    <property type="gene ID" value="ENSMUSG00000066392.13"/>
</dbReference>
<dbReference type="GeneID" id="18191"/>
<dbReference type="KEGG" id="mmu:18191"/>
<dbReference type="UCSC" id="uc007okc.2">
    <molecule id="Q6P9K9-2"/>
    <property type="organism name" value="mouse"/>
</dbReference>
<dbReference type="UCSC" id="uc033ger.1">
    <molecule id="Q6P9K9-1"/>
    <property type="organism name" value="mouse"/>
</dbReference>
<dbReference type="AGR" id="MGI:1096389"/>
<dbReference type="CTD" id="9369"/>
<dbReference type="MGI" id="MGI:1096389">
    <property type="gene designation" value="Nrxn3"/>
</dbReference>
<dbReference type="VEuPathDB" id="HostDB:ENSMUSG00000066392"/>
<dbReference type="eggNOG" id="KOG3514">
    <property type="taxonomic scope" value="Eukaryota"/>
</dbReference>
<dbReference type="GeneTree" id="ENSGT00940000154618"/>
<dbReference type="HOGENOM" id="CLU_001710_0_1_1"/>
<dbReference type="InParanoid" id="Q6P9K9"/>
<dbReference type="OMA" id="MFHNIPT"/>
<dbReference type="OrthoDB" id="5989513at2759"/>
<dbReference type="PhylomeDB" id="Q6P9K9"/>
<dbReference type="TreeFam" id="TF321302"/>
<dbReference type="Reactome" id="R-MMU-6794361">
    <property type="pathway name" value="Neurexins and neuroligins"/>
</dbReference>
<dbReference type="BioGRID-ORCS" id="18191">
    <property type="hits" value="3 hits in 77 CRISPR screens"/>
</dbReference>
<dbReference type="CD-CODE" id="CE726F99">
    <property type="entry name" value="Postsynaptic density"/>
</dbReference>
<dbReference type="ChiTaRS" id="Nrxn3">
    <property type="organism name" value="mouse"/>
</dbReference>
<dbReference type="EvolutionaryTrace" id="Q6P9K9"/>
<dbReference type="Proteomes" id="UP000000589">
    <property type="component" value="Chromosome 12"/>
</dbReference>
<dbReference type="RNAct" id="Q6P9K9">
    <property type="molecule type" value="protein"/>
</dbReference>
<dbReference type="Bgee" id="ENSMUSG00000066392">
    <property type="expression patterns" value="Expressed in rostral migratory stream and 190 other cell types or tissues"/>
</dbReference>
<dbReference type="ExpressionAtlas" id="Q6P9K9">
    <property type="expression patterns" value="baseline and differential"/>
</dbReference>
<dbReference type="GO" id="GO:0042995">
    <property type="term" value="C:cell projection"/>
    <property type="evidence" value="ECO:0007669"/>
    <property type="project" value="UniProtKB-KW"/>
</dbReference>
<dbReference type="GO" id="GO:0098982">
    <property type="term" value="C:GABA-ergic synapse"/>
    <property type="evidence" value="ECO:0000314"/>
    <property type="project" value="SynGO"/>
</dbReference>
<dbReference type="GO" id="GO:0098978">
    <property type="term" value="C:glutamatergic synapse"/>
    <property type="evidence" value="ECO:0000314"/>
    <property type="project" value="SynGO"/>
</dbReference>
<dbReference type="GO" id="GO:0048787">
    <property type="term" value="C:presynaptic active zone membrane"/>
    <property type="evidence" value="ECO:0000314"/>
    <property type="project" value="SynGO"/>
</dbReference>
<dbReference type="GO" id="GO:0042734">
    <property type="term" value="C:presynaptic membrane"/>
    <property type="evidence" value="ECO:0000314"/>
    <property type="project" value="UniProt"/>
</dbReference>
<dbReference type="GO" id="GO:0032991">
    <property type="term" value="C:protein-containing complex"/>
    <property type="evidence" value="ECO:0000353"/>
    <property type="project" value="MGI"/>
</dbReference>
<dbReference type="GO" id="GO:0098820">
    <property type="term" value="C:trans-synaptic protein complex"/>
    <property type="evidence" value="ECO:0000314"/>
    <property type="project" value="UniProt"/>
</dbReference>
<dbReference type="GO" id="GO:0005246">
    <property type="term" value="F:calcium channel regulator activity"/>
    <property type="evidence" value="ECO:0000316"/>
    <property type="project" value="MGI"/>
</dbReference>
<dbReference type="GO" id="GO:0046872">
    <property type="term" value="F:metal ion binding"/>
    <property type="evidence" value="ECO:0007669"/>
    <property type="project" value="UniProtKB-KW"/>
</dbReference>
<dbReference type="GO" id="GO:0007155">
    <property type="term" value="P:cell adhesion"/>
    <property type="evidence" value="ECO:0007669"/>
    <property type="project" value="UniProtKB-KW"/>
</dbReference>
<dbReference type="GO" id="GO:0007268">
    <property type="term" value="P:chemical synaptic transmission"/>
    <property type="evidence" value="ECO:0000316"/>
    <property type="project" value="MGI"/>
</dbReference>
<dbReference type="GO" id="GO:0099645">
    <property type="term" value="P:neurotransmitter receptor localization to postsynaptic specialization membrane"/>
    <property type="evidence" value="ECO:0000314"/>
    <property type="project" value="SynGO"/>
</dbReference>
<dbReference type="GO" id="GO:0007269">
    <property type="term" value="P:neurotransmitter secretion"/>
    <property type="evidence" value="ECO:0000316"/>
    <property type="project" value="MGI"/>
</dbReference>
<dbReference type="GO" id="GO:0097107">
    <property type="term" value="P:postsynaptic density assembly"/>
    <property type="evidence" value="ECO:0000314"/>
    <property type="project" value="SynGO"/>
</dbReference>
<dbReference type="GO" id="GO:0099171">
    <property type="term" value="P:presynaptic modulation of chemical synaptic transmission"/>
    <property type="evidence" value="ECO:0000314"/>
    <property type="project" value="SynGO"/>
</dbReference>
<dbReference type="GO" id="GO:0099072">
    <property type="term" value="P:regulation of postsynaptic membrane neurotransmitter receptor levels"/>
    <property type="evidence" value="ECO:0000314"/>
    <property type="project" value="SynGO"/>
</dbReference>
<dbReference type="GO" id="GO:0007416">
    <property type="term" value="P:synapse assembly"/>
    <property type="evidence" value="ECO:0000316"/>
    <property type="project" value="MGI"/>
</dbReference>
<dbReference type="GO" id="GO:0099537">
    <property type="term" value="P:trans-synaptic signaling"/>
    <property type="evidence" value="ECO:0000314"/>
    <property type="project" value="SynGO"/>
</dbReference>
<dbReference type="GO" id="GO:0099550">
    <property type="term" value="P:trans-synaptic signaling, modulating synaptic transmission"/>
    <property type="evidence" value="ECO:0000314"/>
    <property type="project" value="SynGO"/>
</dbReference>
<dbReference type="CDD" id="cd00054">
    <property type="entry name" value="EGF_CA"/>
    <property type="match status" value="2"/>
</dbReference>
<dbReference type="CDD" id="cd00110">
    <property type="entry name" value="LamG"/>
    <property type="match status" value="6"/>
</dbReference>
<dbReference type="FunFam" id="2.60.120.200:FF:000080">
    <property type="entry name" value="neurexin 3 isoform X1"/>
    <property type="match status" value="1"/>
</dbReference>
<dbReference type="FunFam" id="2.10.25.10:FF:000015">
    <property type="entry name" value="neurexin-1 isoform X1"/>
    <property type="match status" value="1"/>
</dbReference>
<dbReference type="FunFam" id="2.10.25.10:FF:000029">
    <property type="entry name" value="neurexin-1 isoform X1"/>
    <property type="match status" value="1"/>
</dbReference>
<dbReference type="FunFam" id="2.60.120.200:FF:000001">
    <property type="entry name" value="neurexin-1 isoform X1"/>
    <property type="match status" value="1"/>
</dbReference>
<dbReference type="FunFam" id="2.60.120.200:FF:000003">
    <property type="entry name" value="neurexin-1 isoform X1"/>
    <property type="match status" value="1"/>
</dbReference>
<dbReference type="FunFam" id="2.60.120.200:FF:000004">
    <property type="entry name" value="neurexin-1 isoform X1"/>
    <property type="match status" value="1"/>
</dbReference>
<dbReference type="FunFam" id="2.60.120.200:FF:000005">
    <property type="entry name" value="neurexin-1 isoform X1"/>
    <property type="match status" value="1"/>
</dbReference>
<dbReference type="FunFam" id="2.60.120.200:FF:000007">
    <property type="entry name" value="neurexin-1 isoform X1"/>
    <property type="match status" value="1"/>
</dbReference>
<dbReference type="Gene3D" id="2.60.120.200">
    <property type="match status" value="6"/>
</dbReference>
<dbReference type="Gene3D" id="2.10.25.10">
    <property type="entry name" value="Laminin"/>
    <property type="match status" value="3"/>
</dbReference>
<dbReference type="InterPro" id="IPR013320">
    <property type="entry name" value="ConA-like_dom_sf"/>
</dbReference>
<dbReference type="InterPro" id="IPR000742">
    <property type="entry name" value="EGF-like_dom"/>
</dbReference>
<dbReference type="InterPro" id="IPR000152">
    <property type="entry name" value="EGF-type_Asp/Asn_hydroxyl_site"/>
</dbReference>
<dbReference type="InterPro" id="IPR001791">
    <property type="entry name" value="Laminin_G"/>
</dbReference>
<dbReference type="InterPro" id="IPR003585">
    <property type="entry name" value="Neurexin-like"/>
</dbReference>
<dbReference type="InterPro" id="IPR050372">
    <property type="entry name" value="Neurexin-related_CASP"/>
</dbReference>
<dbReference type="InterPro" id="IPR027789">
    <property type="entry name" value="Syndecan/Neurexin_dom"/>
</dbReference>
<dbReference type="PANTHER" id="PTHR15036:SF49">
    <property type="entry name" value="AXOTACTIN"/>
    <property type="match status" value="1"/>
</dbReference>
<dbReference type="PANTHER" id="PTHR15036">
    <property type="entry name" value="PIKACHURIN-LIKE PROTEIN"/>
    <property type="match status" value="1"/>
</dbReference>
<dbReference type="Pfam" id="PF02210">
    <property type="entry name" value="Laminin_G_2"/>
    <property type="match status" value="6"/>
</dbReference>
<dbReference type="Pfam" id="PF01034">
    <property type="entry name" value="Syndecan"/>
    <property type="match status" value="1"/>
</dbReference>
<dbReference type="SMART" id="SM00294">
    <property type="entry name" value="4.1m"/>
    <property type="match status" value="1"/>
</dbReference>
<dbReference type="SMART" id="SM00181">
    <property type="entry name" value="EGF"/>
    <property type="match status" value="3"/>
</dbReference>
<dbReference type="SMART" id="SM00282">
    <property type="entry name" value="LamG"/>
    <property type="match status" value="6"/>
</dbReference>
<dbReference type="SUPFAM" id="SSF49899">
    <property type="entry name" value="Concanavalin A-like lectins/glucanases"/>
    <property type="match status" value="6"/>
</dbReference>
<dbReference type="PROSITE" id="PS00010">
    <property type="entry name" value="ASX_HYDROXYL"/>
    <property type="match status" value="1"/>
</dbReference>
<dbReference type="PROSITE" id="PS50026">
    <property type="entry name" value="EGF_3"/>
    <property type="match status" value="3"/>
</dbReference>
<dbReference type="PROSITE" id="PS50025">
    <property type="entry name" value="LAM_G_DOMAIN"/>
    <property type="match status" value="6"/>
</dbReference>
<keyword id="KW-0002">3D-structure</keyword>
<keyword id="KW-0877">Alternative promoter usage</keyword>
<keyword id="KW-0025">Alternative splicing</keyword>
<keyword id="KW-0106">Calcium</keyword>
<keyword id="KW-0130">Cell adhesion</keyword>
<keyword id="KW-1003">Cell membrane</keyword>
<keyword id="KW-0966">Cell projection</keyword>
<keyword id="KW-1015">Disulfide bond</keyword>
<keyword id="KW-0245">EGF-like domain</keyword>
<keyword id="KW-0325">Glycoprotein</keyword>
<keyword id="KW-0357">Heparan sulfate</keyword>
<keyword id="KW-0472">Membrane</keyword>
<keyword id="KW-0479">Metal-binding</keyword>
<keyword id="KW-0654">Proteoglycan</keyword>
<keyword id="KW-1185">Reference proteome</keyword>
<keyword id="KW-0677">Repeat</keyword>
<keyword id="KW-0732">Signal</keyword>
<keyword id="KW-0770">Synapse</keyword>
<keyword id="KW-0812">Transmembrane</keyword>
<keyword id="KW-1133">Transmembrane helix</keyword>
<evidence type="ECO:0000250" key="1">
    <source>
        <dbReference type="UniProtKB" id="Q07310"/>
    </source>
</evidence>
<evidence type="ECO:0000250" key="2">
    <source>
        <dbReference type="UniProtKB" id="Q28146"/>
    </source>
</evidence>
<evidence type="ECO:0000250" key="3">
    <source>
        <dbReference type="UniProtKB" id="Q63376"/>
    </source>
</evidence>
<evidence type="ECO:0000250" key="4">
    <source>
        <dbReference type="UniProtKB" id="Q8C985"/>
    </source>
</evidence>
<evidence type="ECO:0000250" key="5">
    <source>
        <dbReference type="UniProtKB" id="Q9CS84"/>
    </source>
</evidence>
<evidence type="ECO:0000255" key="6"/>
<evidence type="ECO:0000255" key="7">
    <source>
        <dbReference type="PROSITE-ProRule" id="PRU00076"/>
    </source>
</evidence>
<evidence type="ECO:0000255" key="8">
    <source>
        <dbReference type="PROSITE-ProRule" id="PRU00122"/>
    </source>
</evidence>
<evidence type="ECO:0000256" key="9">
    <source>
        <dbReference type="SAM" id="MobiDB-lite"/>
    </source>
</evidence>
<evidence type="ECO:0000269" key="10">
    <source>
    </source>
</evidence>
<evidence type="ECO:0000269" key="11">
    <source>
    </source>
</evidence>
<evidence type="ECO:0000269" key="12">
    <source>
    </source>
</evidence>
<evidence type="ECO:0000269" key="13">
    <source>
    </source>
</evidence>
<evidence type="ECO:0000269" key="14">
    <source>
    </source>
</evidence>
<evidence type="ECO:0000303" key="15">
    <source>
    </source>
</evidence>
<evidence type="ECO:0000305" key="16"/>
<evidence type="ECO:0007829" key="17">
    <source>
        <dbReference type="PDB" id="3MW4"/>
    </source>
</evidence>
<accession>Q6P9K9</accession>
<accession>E9PW93</accession>
<accession>E9Q466</accession>
<accession>Q8CCT8</accession>
<reference key="1">
    <citation type="journal article" date="2005" name="Science">
        <title>The transcriptional landscape of the mammalian genome.</title>
        <authorList>
            <person name="Carninci P."/>
            <person name="Kasukawa T."/>
            <person name="Katayama S."/>
            <person name="Gough J."/>
            <person name="Frith M.C."/>
            <person name="Maeda N."/>
            <person name="Oyama R."/>
            <person name="Ravasi T."/>
            <person name="Lenhard B."/>
            <person name="Wells C."/>
            <person name="Kodzius R."/>
            <person name="Shimokawa K."/>
            <person name="Bajic V.B."/>
            <person name="Brenner S.E."/>
            <person name="Batalov S."/>
            <person name="Forrest A.R."/>
            <person name="Zavolan M."/>
            <person name="Davis M.J."/>
            <person name="Wilming L.G."/>
            <person name="Aidinis V."/>
            <person name="Allen J.E."/>
            <person name="Ambesi-Impiombato A."/>
            <person name="Apweiler R."/>
            <person name="Aturaliya R.N."/>
            <person name="Bailey T.L."/>
            <person name="Bansal M."/>
            <person name="Baxter L."/>
            <person name="Beisel K.W."/>
            <person name="Bersano T."/>
            <person name="Bono H."/>
            <person name="Chalk A.M."/>
            <person name="Chiu K.P."/>
            <person name="Choudhary V."/>
            <person name="Christoffels A."/>
            <person name="Clutterbuck D.R."/>
            <person name="Crowe M.L."/>
            <person name="Dalla E."/>
            <person name="Dalrymple B.P."/>
            <person name="de Bono B."/>
            <person name="Della Gatta G."/>
            <person name="di Bernardo D."/>
            <person name="Down T."/>
            <person name="Engstrom P."/>
            <person name="Fagiolini M."/>
            <person name="Faulkner G."/>
            <person name="Fletcher C.F."/>
            <person name="Fukushima T."/>
            <person name="Furuno M."/>
            <person name="Futaki S."/>
            <person name="Gariboldi M."/>
            <person name="Georgii-Hemming P."/>
            <person name="Gingeras T.R."/>
            <person name="Gojobori T."/>
            <person name="Green R.E."/>
            <person name="Gustincich S."/>
            <person name="Harbers M."/>
            <person name="Hayashi Y."/>
            <person name="Hensch T.K."/>
            <person name="Hirokawa N."/>
            <person name="Hill D."/>
            <person name="Huminiecki L."/>
            <person name="Iacono M."/>
            <person name="Ikeo K."/>
            <person name="Iwama A."/>
            <person name="Ishikawa T."/>
            <person name="Jakt M."/>
            <person name="Kanapin A."/>
            <person name="Katoh M."/>
            <person name="Kawasawa Y."/>
            <person name="Kelso J."/>
            <person name="Kitamura H."/>
            <person name="Kitano H."/>
            <person name="Kollias G."/>
            <person name="Krishnan S.P."/>
            <person name="Kruger A."/>
            <person name="Kummerfeld S.K."/>
            <person name="Kurochkin I.V."/>
            <person name="Lareau L.F."/>
            <person name="Lazarevic D."/>
            <person name="Lipovich L."/>
            <person name="Liu J."/>
            <person name="Liuni S."/>
            <person name="McWilliam S."/>
            <person name="Madan Babu M."/>
            <person name="Madera M."/>
            <person name="Marchionni L."/>
            <person name="Matsuda H."/>
            <person name="Matsuzawa S."/>
            <person name="Miki H."/>
            <person name="Mignone F."/>
            <person name="Miyake S."/>
            <person name="Morris K."/>
            <person name="Mottagui-Tabar S."/>
            <person name="Mulder N."/>
            <person name="Nakano N."/>
            <person name="Nakauchi H."/>
            <person name="Ng P."/>
            <person name="Nilsson R."/>
            <person name="Nishiguchi S."/>
            <person name="Nishikawa S."/>
            <person name="Nori F."/>
            <person name="Ohara O."/>
            <person name="Okazaki Y."/>
            <person name="Orlando V."/>
            <person name="Pang K.C."/>
            <person name="Pavan W.J."/>
            <person name="Pavesi G."/>
            <person name="Pesole G."/>
            <person name="Petrovsky N."/>
            <person name="Piazza S."/>
            <person name="Reed J."/>
            <person name="Reid J.F."/>
            <person name="Ring B.Z."/>
            <person name="Ringwald M."/>
            <person name="Rost B."/>
            <person name="Ruan Y."/>
            <person name="Salzberg S.L."/>
            <person name="Sandelin A."/>
            <person name="Schneider C."/>
            <person name="Schoenbach C."/>
            <person name="Sekiguchi K."/>
            <person name="Semple C.A."/>
            <person name="Seno S."/>
            <person name="Sessa L."/>
            <person name="Sheng Y."/>
            <person name="Shibata Y."/>
            <person name="Shimada H."/>
            <person name="Shimada K."/>
            <person name="Silva D."/>
            <person name="Sinclair B."/>
            <person name="Sperling S."/>
            <person name="Stupka E."/>
            <person name="Sugiura K."/>
            <person name="Sultana R."/>
            <person name="Takenaka Y."/>
            <person name="Taki K."/>
            <person name="Tammoja K."/>
            <person name="Tan S.L."/>
            <person name="Tang S."/>
            <person name="Taylor M.S."/>
            <person name="Tegner J."/>
            <person name="Teichmann S.A."/>
            <person name="Ueda H.R."/>
            <person name="van Nimwegen E."/>
            <person name="Verardo R."/>
            <person name="Wei C.L."/>
            <person name="Yagi K."/>
            <person name="Yamanishi H."/>
            <person name="Zabarovsky E."/>
            <person name="Zhu S."/>
            <person name="Zimmer A."/>
            <person name="Hide W."/>
            <person name="Bult C."/>
            <person name="Grimmond S.M."/>
            <person name="Teasdale R.D."/>
            <person name="Liu E.T."/>
            <person name="Brusic V."/>
            <person name="Quackenbush J."/>
            <person name="Wahlestedt C."/>
            <person name="Mattick J.S."/>
            <person name="Hume D.A."/>
            <person name="Kai C."/>
            <person name="Sasaki D."/>
            <person name="Tomaru Y."/>
            <person name="Fukuda S."/>
            <person name="Kanamori-Katayama M."/>
            <person name="Suzuki M."/>
            <person name="Aoki J."/>
            <person name="Arakawa T."/>
            <person name="Iida J."/>
            <person name="Imamura K."/>
            <person name="Itoh M."/>
            <person name="Kato T."/>
            <person name="Kawaji H."/>
            <person name="Kawagashira N."/>
            <person name="Kawashima T."/>
            <person name="Kojima M."/>
            <person name="Kondo S."/>
            <person name="Konno H."/>
            <person name="Nakano K."/>
            <person name="Ninomiya N."/>
            <person name="Nishio T."/>
            <person name="Okada M."/>
            <person name="Plessy C."/>
            <person name="Shibata K."/>
            <person name="Shiraki T."/>
            <person name="Suzuki S."/>
            <person name="Tagami M."/>
            <person name="Waki K."/>
            <person name="Watahiki A."/>
            <person name="Okamura-Oho Y."/>
            <person name="Suzuki H."/>
            <person name="Kawai J."/>
            <person name="Hayashizaki Y."/>
        </authorList>
    </citation>
    <scope>NUCLEOTIDE SEQUENCE [LARGE SCALE MRNA] (ISOFORM 2A)</scope>
    <source>
        <strain>C57BL/6J</strain>
        <tissue>Medulla oblongata</tissue>
    </source>
</reference>
<reference key="2">
    <citation type="journal article" date="2009" name="PLoS Biol.">
        <title>Lineage-specific biology revealed by a finished genome assembly of the mouse.</title>
        <authorList>
            <person name="Church D.M."/>
            <person name="Goodstadt L."/>
            <person name="Hillier L.W."/>
            <person name="Zody M.C."/>
            <person name="Goldstein S."/>
            <person name="She X."/>
            <person name="Bult C.J."/>
            <person name="Agarwala R."/>
            <person name="Cherry J.L."/>
            <person name="DiCuccio M."/>
            <person name="Hlavina W."/>
            <person name="Kapustin Y."/>
            <person name="Meric P."/>
            <person name="Maglott D."/>
            <person name="Birtle Z."/>
            <person name="Marques A.C."/>
            <person name="Graves T."/>
            <person name="Zhou S."/>
            <person name="Teague B."/>
            <person name="Potamousis K."/>
            <person name="Churas C."/>
            <person name="Place M."/>
            <person name="Herschleb J."/>
            <person name="Runnheim R."/>
            <person name="Forrest D."/>
            <person name="Amos-Landgraf J."/>
            <person name="Schwartz D.C."/>
            <person name="Cheng Z."/>
            <person name="Lindblad-Toh K."/>
            <person name="Eichler E.E."/>
            <person name="Ponting C.P."/>
        </authorList>
    </citation>
    <scope>NUCLEOTIDE SEQUENCE [LARGE SCALE GENOMIC DNA]</scope>
    <source>
        <strain>C57BL/6J</strain>
    </source>
</reference>
<reference key="3">
    <citation type="journal article" date="2004" name="Genome Res.">
        <title>The status, quality, and expansion of the NIH full-length cDNA project: the Mammalian Gene Collection (MGC).</title>
        <authorList>
            <consortium name="The MGC Project Team"/>
        </authorList>
    </citation>
    <scope>NUCLEOTIDE SEQUENCE [LARGE SCALE MRNA] (ISOFORM 1A)</scope>
    <source>
        <strain>C57BL/6J</strain>
        <tissue>Brain</tissue>
    </source>
</reference>
<reference key="4">
    <citation type="journal article" date="2009" name="Proc. Natl. Acad. Sci. U.S.A.">
        <title>The synaptic proteins neurexins and neuroligins are widely expressed in the vascular system and contribute to its functions.</title>
        <authorList>
            <person name="Bottos A."/>
            <person name="Destro E."/>
            <person name="Rissone A."/>
            <person name="Graziano S."/>
            <person name="Cordara G."/>
            <person name="Assenzio B."/>
            <person name="Cera M.R."/>
            <person name="Mascia L."/>
            <person name="Bussolino F."/>
            <person name="Arese M."/>
        </authorList>
    </citation>
    <scope>TISSUE SPECIFICITY</scope>
</reference>
<reference key="5">
    <citation type="journal article" date="2010" name="Cell">
        <title>A tissue-specific atlas of mouse protein phosphorylation and expression.</title>
        <authorList>
            <person name="Huttlin E.L."/>
            <person name="Jedrychowski M.P."/>
            <person name="Elias J.E."/>
            <person name="Goswami T."/>
            <person name="Rad R."/>
            <person name="Beausoleil S.A."/>
            <person name="Villen J."/>
            <person name="Haas W."/>
            <person name="Sowa M.E."/>
            <person name="Gygi S.P."/>
        </authorList>
    </citation>
    <scope>IDENTIFICATION BY MASS SPECTROMETRY [LARGE SCALE ANALYSIS]</scope>
    <source>
        <tissue>Brain</tissue>
    </source>
</reference>
<reference key="6">
    <citation type="journal article" date="2013" name="Neuron">
        <title>The specific alpha-neurexin interactor calsyntenin-3 promotes excitatory and inhibitory synapse development.</title>
        <authorList>
            <person name="Pettem K.L."/>
            <person name="Yokomaku D."/>
            <person name="Luo L."/>
            <person name="Linhoff M.W."/>
            <person name="Prasad T."/>
            <person name="Connor S.A."/>
            <person name="Siddiqui T.J."/>
            <person name="Kawabe H."/>
            <person name="Chen F."/>
            <person name="Zhang L."/>
            <person name="Rudenko G."/>
            <person name="Wang Y.T."/>
            <person name="Brose N."/>
            <person name="Craig A.M."/>
        </authorList>
    </citation>
    <scope>INTERACTION WITH CLSTN3</scope>
</reference>
<reference key="7">
    <citation type="journal article" date="2014" name="Cell Rep.">
        <title>Calsyntenins function as synaptogenic adhesion molecules in concert with neurexins.</title>
        <authorList>
            <person name="Um J.W."/>
            <person name="Pramanik G."/>
            <person name="Ko J.S."/>
            <person name="Song M.Y."/>
            <person name="Lee D."/>
            <person name="Kim H."/>
            <person name="Park K.S."/>
            <person name="Suedhof T.C."/>
            <person name="Tabuchi K."/>
            <person name="Ko J."/>
        </authorList>
    </citation>
    <scope>INTERACTION WITH CLSTN3</scope>
</reference>
<reference key="8">
    <citation type="journal article" date="2018" name="Cell">
        <title>Heparan Sulfate Organizes Neuronal Synapses through Neurexin Partnerships.</title>
        <authorList>
            <person name="Zhang P."/>
            <person name="Lu H."/>
            <person name="Peixoto R.T."/>
            <person name="Pines M.K."/>
            <person name="Ge Y."/>
            <person name="Oku S."/>
            <person name="Siddiqui T.J."/>
            <person name="Xie Y."/>
            <person name="Wu W."/>
            <person name="Archer-Hartmann S."/>
            <person name="Yoshida K."/>
            <person name="Tanaka K.F."/>
            <person name="Aricescu A.R."/>
            <person name="Azadi P."/>
            <person name="Gordon M.D."/>
            <person name="Sabatini B.L."/>
            <person name="Wong R.O.L."/>
            <person name="Craig A.M."/>
        </authorList>
    </citation>
    <scope>GLYCOSYLATION</scope>
</reference>
<reference key="9">
    <citation type="journal article" date="2020" name="J. Biol. Chem.">
        <title>Calsyntenin-3 interacts with both alpha- and beta-neurexins in the regulation of excitatory synaptic innervation in specific Schaffer collateral pathways.</title>
        <authorList>
            <person name="Kim H."/>
            <person name="Kim D."/>
            <person name="Kim J."/>
            <person name="Lee H.Y."/>
            <person name="Park D."/>
            <person name="Kang H."/>
            <person name="Matsuda K."/>
            <person name="Sterky F.H."/>
            <person name="Yuzaki M."/>
            <person name="Kim J.Y."/>
            <person name="Choi S.Y."/>
            <person name="Ko J."/>
            <person name="Um J.W."/>
        </authorList>
    </citation>
    <scope>INTERACTION WITH CLSTN3</scope>
</reference>
<proteinExistence type="evidence at protein level"/>
<name>NRX3A_MOUSE</name>
<sequence>MSFTLHSVFFTLKVSIFLGSLVGLCLGLEFMGLPNQWARYLRWDASTRSDLSFQFKTNVSTGLLLYLDDGGVCDFLCLSLVDGRVQLRFSMDCAETTVLSNKQVNDSSWHFLMVSRDRVRTGLVIDGEGQSGELRPQRPYMDVVSDLFLGGVPADIRPSALTLDGVQSMPGFKGLMLDLKYGNSEPRLLGSQSVQLEAEGPCGERPCENGGICFLLDGHPTCDCSTTGYGGTLCSEDVSQGPGLSHLMMSEQAREENVATFRGSEYLCYDLSQNPIQSSSDEITLSFKTWQRNGLILHTGKSADYVNLALKDGAVSLVINLGSGAFEAIVEPVNGKFNDNAWHDVKVTRNLRQVTISVDGILTTTGYTQEDYTMLGSDDFFYVGGSPSTADLPGSPVSNNFMGCLKEVVYKNNDIRLELSRLARIGDTKMKIYGEVVFKCENVATLDPINFETPEAYISLPKWNTKRMGSISFDFRTTEPNGLILFTHGKPQERKDVRSQKNTKVDFFAVELLDGNLYLLLDMGSGTIKVKATQKKANDGEWYHVDIQRDGRSGTISVNSRRTPFTASGESEILDLEGDMYLGGLPENRAGLILPTELWTAMLNYGYVGCIRDLFIDGRSKNIRQLAEMQNAAGVKSSCSRMSAKQCDSYPCKNNAVCKDGWNRFICDCTGTGYWGRTCEREASILSYDGSMYMKVIMPMVMHTEAEDVSFRFMSQRAYGLLVATTSRDSADTLRLELDGGRVKLMVNLDCIRINCNSSKGPETLYAGQKLNDNEWHTVRVVRRGKSLKLTVDDDVAEGTMVGDHTRLEFHNIETGIMTEKRYISVVPSSFIGHLQSLMFNGLLYIDLCKNGDIDYCELKARFGLRNIIADPVTFKTKSSYLTLATLQAYTSMHLFFQFKTTSADGFILFNSGDGNDFIAVELVKGYIHYVFDLGNGPNVIKGNSDRPLNDNQWHNVVITRDSSNTHSLKVDTKVVTQVINGAKNLDLKGDLYMAGLAQGMYSNLPKLVASRDGFQGCLASVDLNGRLPDLINDALHRSGQIERGCEGPSTTCQEDSCANQGVCMQQWEGFTCDCSMTSYSGNQCNDPGATYIFGKSGGLILYTWPANDRPSTRSDRLAVGFSTTVKDGILVRIDSAPGLGDFLQLHIEQGKIGVVFNIGTVDISIKEERTPVNDGKYHVVRFTRNGGNATLQVDNWPVNEHYPTGNTDNERLQMVKQKIPFKYNRPVEEWLQEKGRQLTIFNTQAQIAIGGKDKGRLFQGQLSGLYYDGLKVLNMAAENNPNIKINGSVRLVGEVPSVSGTTQTTSMPPEMSTTVMETTTTMATTTTRKNRSTASIQPTSDDLVSSAECSSDDEDFVECEPSTDKSLSTSIFEGGYKAHAPKWESKDFRPNKVSETSRTTTTSLSPELIRFTASSSSGMVPKLPAGKMNNRDLKPQPDIVLLPLPTAYELDSTKLKSPLITSPMFRNVPTANPTEPGIRRVPGASEVIRESSSTTGMVVGIVAAAALCILILLYAMYKYRNRDEGSYQVDETRNYISNSAQSNGTLMKEKQASSKSGHKKQKNKDKEYYV</sequence>